<evidence type="ECO:0000255" key="1">
    <source>
        <dbReference type="PROSITE-ProRule" id="PRU00295"/>
    </source>
</evidence>
<evidence type="ECO:0000305" key="2"/>
<feature type="chain" id="PRO_0000220983" description="Metalloproteinase inhibitor 2">
    <location>
        <begin position="1" status="less than"/>
        <end position="91" status="greater than"/>
    </location>
</feature>
<feature type="domain" description="NTR" evidence="1">
    <location>
        <begin position="1" status="less than"/>
        <end position="91" status="greater than"/>
    </location>
</feature>
<feature type="non-terminal residue">
    <location>
        <position position="1"/>
    </location>
</feature>
<feature type="non-terminal residue">
    <location>
        <position position="91"/>
    </location>
</feature>
<comment type="function">
    <text>Complexes with metalloproteinases (such as collagenases) and irreversibly inactivates them.</text>
</comment>
<comment type="subcellular location">
    <subcellularLocation>
        <location>Secreted</location>
    </subcellularLocation>
</comment>
<comment type="PTM">
    <text>The activity of TIMP2 is dependent on the presence of disulfide bonds.</text>
</comment>
<comment type="similarity">
    <text evidence="2">Belongs to the protease inhibitor I35 (TIMP) family.</text>
</comment>
<accession>O77717</accession>
<keyword id="KW-0903">Direct protein sequencing</keyword>
<keyword id="KW-1015">Disulfide bond</keyword>
<keyword id="KW-0481">Metalloenzyme inhibitor</keyword>
<keyword id="KW-0483">Metalloprotease inhibitor</keyword>
<keyword id="KW-0646">Protease inhibitor</keyword>
<keyword id="KW-1185">Reference proteome</keyword>
<keyword id="KW-0964">Secreted</keyword>
<organism>
    <name type="scientific">Equus caballus</name>
    <name type="common">Horse</name>
    <dbReference type="NCBI Taxonomy" id="9796"/>
    <lineage>
        <taxon>Eukaryota</taxon>
        <taxon>Metazoa</taxon>
        <taxon>Chordata</taxon>
        <taxon>Craniata</taxon>
        <taxon>Vertebrata</taxon>
        <taxon>Euteleostomi</taxon>
        <taxon>Mammalia</taxon>
        <taxon>Eutheria</taxon>
        <taxon>Laurasiatheria</taxon>
        <taxon>Perissodactyla</taxon>
        <taxon>Equidae</taxon>
        <taxon>Equus</taxon>
    </lineage>
</organism>
<proteinExistence type="evidence at protein level"/>
<gene>
    <name type="primary">TIMP2</name>
    <name type="synonym">TIMP-2</name>
</gene>
<sequence>KAVSEKEVDSGNDIYGNPIKRIQYEIKQIKMFKGPDKDIEFIYTAPSSAVCGVSLDVGGKKEYLIAGKADGNGKMHITLCDFIVPWDTLST</sequence>
<protein>
    <recommendedName>
        <fullName>Metalloproteinase inhibitor 2</fullName>
    </recommendedName>
    <alternativeName>
        <fullName>Tissue inhibitor of metalloproteinases 2</fullName>
        <shortName>TIMP-2</shortName>
    </alternativeName>
</protein>
<reference key="1">
    <citation type="journal article" date="1999" name="Vet. J.">
        <title>Molecular studies of matrix metalloproteinases and tissue inhibitors of metalloproteinases in equine joints.</title>
        <authorList>
            <person name="Clegg P.D."/>
            <person name="Radford A.D."/>
            <person name="Carter S.D."/>
        </authorList>
    </citation>
    <scope>NUCLEOTIDE SEQUENCE [MRNA]</scope>
    <source>
        <tissue>Articular cartilage</tissue>
    </source>
</reference>
<reference key="2">
    <citation type="journal article" date="1998" name="Equine Vet. J.">
        <title>Equine TIMP-1 and TIMP-2: identification, activity and cellular sources.</title>
        <authorList>
            <person name="Clegg P.D."/>
            <person name="Coughlan A.R."/>
            <person name="Carter S.D."/>
        </authorList>
    </citation>
    <scope>PROTEIN SEQUENCE OF N-TERMINUS</scope>
</reference>
<dbReference type="EMBL" id="AJ010315">
    <property type="protein sequence ID" value="CAA09080.1"/>
    <property type="molecule type" value="mRNA"/>
</dbReference>
<dbReference type="SMR" id="O77717"/>
<dbReference type="STRING" id="9796.ENSECAP00000048160"/>
<dbReference type="PaxDb" id="9796-ENSECAP00000048160"/>
<dbReference type="InParanoid" id="O77717"/>
<dbReference type="Proteomes" id="UP000002281">
    <property type="component" value="Unplaced"/>
</dbReference>
<dbReference type="GO" id="GO:0031012">
    <property type="term" value="C:extracellular matrix"/>
    <property type="evidence" value="ECO:0000318"/>
    <property type="project" value="GO_Central"/>
</dbReference>
<dbReference type="GO" id="GO:0005615">
    <property type="term" value="C:extracellular space"/>
    <property type="evidence" value="ECO:0000318"/>
    <property type="project" value="GO_Central"/>
</dbReference>
<dbReference type="GO" id="GO:0008191">
    <property type="term" value="F:metalloendopeptidase inhibitor activity"/>
    <property type="evidence" value="ECO:0000318"/>
    <property type="project" value="GO_Central"/>
</dbReference>
<dbReference type="GO" id="GO:0051045">
    <property type="term" value="P:negative regulation of membrane protein ectodomain proteolysis"/>
    <property type="evidence" value="ECO:0000318"/>
    <property type="project" value="GO_Central"/>
</dbReference>
<dbReference type="GO" id="GO:0034097">
    <property type="term" value="P:response to cytokine"/>
    <property type="evidence" value="ECO:0000318"/>
    <property type="project" value="GO_Central"/>
</dbReference>
<dbReference type="GO" id="GO:0009725">
    <property type="term" value="P:response to hormone"/>
    <property type="evidence" value="ECO:0000318"/>
    <property type="project" value="GO_Central"/>
</dbReference>
<dbReference type="FunFam" id="2.40.50.120:FF:000007">
    <property type="entry name" value="Metalloproteinase inhibitor 2"/>
    <property type="match status" value="1"/>
</dbReference>
<dbReference type="Gene3D" id="2.40.50.120">
    <property type="match status" value="1"/>
</dbReference>
<dbReference type="InterPro" id="IPR001134">
    <property type="entry name" value="Netrin_domain"/>
</dbReference>
<dbReference type="InterPro" id="IPR001820">
    <property type="entry name" value="TIMP"/>
</dbReference>
<dbReference type="InterPro" id="IPR008993">
    <property type="entry name" value="TIMP-like_OB-fold"/>
</dbReference>
<dbReference type="PANTHER" id="PTHR11844">
    <property type="entry name" value="METALLOPROTEASE INHIBITOR"/>
    <property type="match status" value="1"/>
</dbReference>
<dbReference type="PANTHER" id="PTHR11844:SF24">
    <property type="entry name" value="METALLOPROTEINASE INHIBITOR 2"/>
    <property type="match status" value="1"/>
</dbReference>
<dbReference type="Pfam" id="PF00965">
    <property type="entry name" value="TIMP"/>
    <property type="match status" value="1"/>
</dbReference>
<dbReference type="SMART" id="SM00206">
    <property type="entry name" value="NTR"/>
    <property type="match status" value="1"/>
</dbReference>
<dbReference type="SUPFAM" id="SSF50242">
    <property type="entry name" value="TIMP-like"/>
    <property type="match status" value="1"/>
</dbReference>
<dbReference type="PROSITE" id="PS50189">
    <property type="entry name" value="NTR"/>
    <property type="match status" value="1"/>
</dbReference>
<name>TIMP2_HORSE</name>